<comment type="function">
    <text evidence="3">Specifically dimethylates two adjacent adenosines in the loop of a conserved hairpin near the 3'-end of 18S rRNA in the 40S particle.</text>
</comment>
<comment type="catalytic activity">
    <reaction evidence="5">
        <text>adenosine(1779)/adenosine(1780) in 18S rRNA + 4 S-adenosyl-L-methionine = N(6)-dimethyladenosine(1779)/N(6)-dimethyladenosine(1780) in 18S rRNA + 4 S-adenosyl-L-homocysteine + 4 H(+)</text>
        <dbReference type="Rhea" id="RHEA:42780"/>
        <dbReference type="Rhea" id="RHEA-COMP:10234"/>
        <dbReference type="Rhea" id="RHEA-COMP:10236"/>
        <dbReference type="ChEBI" id="CHEBI:15378"/>
        <dbReference type="ChEBI" id="CHEBI:57856"/>
        <dbReference type="ChEBI" id="CHEBI:59789"/>
        <dbReference type="ChEBI" id="CHEBI:74411"/>
        <dbReference type="ChEBI" id="CHEBI:74493"/>
        <dbReference type="EC" id="2.1.1.183"/>
    </reaction>
</comment>
<comment type="subcellular location">
    <subcellularLocation>
        <location evidence="2">Cytoplasm</location>
    </subcellularLocation>
    <subcellularLocation>
        <location evidence="2">Nucleus</location>
        <location evidence="2">Nucleolus</location>
    </subcellularLocation>
</comment>
<comment type="similarity">
    <text evidence="1">Belongs to the class I-like SAM-binding methyltransferase superfamily. rRNA adenine N(6)-methyltransferase family.</text>
</comment>
<keyword id="KW-0002">3D-structure</keyword>
<keyword id="KW-0963">Cytoplasm</keyword>
<keyword id="KW-0489">Methyltransferase</keyword>
<keyword id="KW-0539">Nucleus</keyword>
<keyword id="KW-1185">Reference proteome</keyword>
<keyword id="KW-0690">Ribosome biogenesis</keyword>
<keyword id="KW-0694">RNA-binding</keyword>
<keyword id="KW-0698">rRNA processing</keyword>
<keyword id="KW-0949">S-adenosyl-L-methionine</keyword>
<keyword id="KW-0808">Transferase</keyword>
<reference key="1">
    <citation type="journal article" date="1994" name="J. Mol. Biol.">
        <title>The DIM1 gene responsible for the conserved m6(2)Am6(2)A dimethylation in the 3'-terminal loop of 18 S rRNA is essential in yeast.</title>
        <authorList>
            <person name="Lafontaine D."/>
            <person name="Delcour J."/>
            <person name="Glasser A.L."/>
            <person name="Desgres J."/>
            <person name="Vandenhaute J."/>
        </authorList>
    </citation>
    <scope>NUCLEOTIDE SEQUENCE [GENOMIC DNA]</scope>
    <scope>FUNCTION</scope>
    <scope>CATALYTIC ACTIVITY</scope>
    <source>
        <strain>ATCC 28383 / FL100 / VTT C-80102</strain>
    </source>
</reference>
<reference key="2">
    <citation type="journal article" date="1997" name="Nature">
        <title>The nucleotide sequence of Saccharomyces cerevisiae chromosome XVI.</title>
        <authorList>
            <person name="Bussey H."/>
            <person name="Storms R.K."/>
            <person name="Ahmed A."/>
            <person name="Albermann K."/>
            <person name="Allen E."/>
            <person name="Ansorge W."/>
            <person name="Araujo R."/>
            <person name="Aparicio A."/>
            <person name="Barrell B.G."/>
            <person name="Badcock K."/>
            <person name="Benes V."/>
            <person name="Botstein D."/>
            <person name="Bowman S."/>
            <person name="Brueckner M."/>
            <person name="Carpenter J."/>
            <person name="Cherry J.M."/>
            <person name="Chung E."/>
            <person name="Churcher C.M."/>
            <person name="Coster F."/>
            <person name="Davis K."/>
            <person name="Davis R.W."/>
            <person name="Dietrich F.S."/>
            <person name="Delius H."/>
            <person name="DiPaolo T."/>
            <person name="Dubois E."/>
            <person name="Duesterhoeft A."/>
            <person name="Duncan M."/>
            <person name="Floeth M."/>
            <person name="Fortin N."/>
            <person name="Friesen J.D."/>
            <person name="Fritz C."/>
            <person name="Goffeau A."/>
            <person name="Hall J."/>
            <person name="Hebling U."/>
            <person name="Heumann K."/>
            <person name="Hilbert H."/>
            <person name="Hillier L.W."/>
            <person name="Hunicke-Smith S."/>
            <person name="Hyman R.W."/>
            <person name="Johnston M."/>
            <person name="Kalman S."/>
            <person name="Kleine K."/>
            <person name="Komp C."/>
            <person name="Kurdi O."/>
            <person name="Lashkari D."/>
            <person name="Lew H."/>
            <person name="Lin A."/>
            <person name="Lin D."/>
            <person name="Louis E.J."/>
            <person name="Marathe R."/>
            <person name="Messenguy F."/>
            <person name="Mewes H.-W."/>
            <person name="Mirtipati S."/>
            <person name="Moestl D."/>
            <person name="Mueller-Auer S."/>
            <person name="Namath A."/>
            <person name="Nentwich U."/>
            <person name="Oefner P."/>
            <person name="Pearson D."/>
            <person name="Petel F.X."/>
            <person name="Pohl T.M."/>
            <person name="Purnelle B."/>
            <person name="Rajandream M.A."/>
            <person name="Rechmann S."/>
            <person name="Rieger M."/>
            <person name="Riles L."/>
            <person name="Roberts D."/>
            <person name="Schaefer M."/>
            <person name="Scharfe M."/>
            <person name="Scherens B."/>
            <person name="Schramm S."/>
            <person name="Schroeder M."/>
            <person name="Sdicu A.-M."/>
            <person name="Tettelin H."/>
            <person name="Urrestarazu L.A."/>
            <person name="Ushinsky S."/>
            <person name="Vierendeels F."/>
            <person name="Vissers S."/>
            <person name="Voss H."/>
            <person name="Walsh S.V."/>
            <person name="Wambutt R."/>
            <person name="Wang Y."/>
            <person name="Wedler E."/>
            <person name="Wedler H."/>
            <person name="Winnett E."/>
            <person name="Zhong W.-W."/>
            <person name="Zollner A."/>
            <person name="Vo D.H."/>
            <person name="Hani J."/>
        </authorList>
    </citation>
    <scope>NUCLEOTIDE SEQUENCE [LARGE SCALE GENOMIC DNA]</scope>
    <source>
        <strain>ATCC 204508 / S288c</strain>
    </source>
</reference>
<reference key="3">
    <citation type="journal article" date="2014" name="G3 (Bethesda)">
        <title>The reference genome sequence of Saccharomyces cerevisiae: Then and now.</title>
        <authorList>
            <person name="Engel S.R."/>
            <person name="Dietrich F.S."/>
            <person name="Fisk D.G."/>
            <person name="Binkley G."/>
            <person name="Balakrishnan R."/>
            <person name="Costanzo M.C."/>
            <person name="Dwight S.S."/>
            <person name="Hitz B.C."/>
            <person name="Karra K."/>
            <person name="Nash R.S."/>
            <person name="Weng S."/>
            <person name="Wong E.D."/>
            <person name="Lloyd P."/>
            <person name="Skrzypek M.S."/>
            <person name="Miyasato S.R."/>
            <person name="Simison M."/>
            <person name="Cherry J.M."/>
        </authorList>
    </citation>
    <scope>GENOME REANNOTATION</scope>
    <source>
        <strain>ATCC 204508 / S288c</strain>
    </source>
</reference>
<reference key="4">
    <citation type="journal article" date="2003" name="EMBO J.">
        <title>The path from nucleolar 90S to cytoplasmic 40S pre-ribosomes.</title>
        <authorList>
            <person name="Schaefer T."/>
            <person name="Strauss D."/>
            <person name="Petfalski E."/>
            <person name="Tollervey D."/>
            <person name="Hurt E."/>
        </authorList>
    </citation>
    <scope>SUBCELLULAR LOCATION</scope>
</reference>
<reference key="5">
    <citation type="journal article" date="2018" name="J. Proteome Res.">
        <title>Enrichment-based proteogenomics identifies microproteins, missing proteins, and novel smORFs in Saccharomyces cerevisiae.</title>
        <authorList>
            <person name="He C."/>
            <person name="Jia C."/>
            <person name="Zhang Y."/>
            <person name="Xu P."/>
        </authorList>
    </citation>
    <scope>IDENTIFICATION BY MASS SPECTROMETRY</scope>
</reference>
<reference evidence="7" key="6">
    <citation type="journal article" date="2019" name="Nat. Commun.">
        <title>Conformational proofreading of distant 40S ribosomal subunit maturation events by a long-range communication mechanism.</title>
        <authorList>
            <person name="Mitterer V."/>
            <person name="Shayan R."/>
            <person name="Ferreira-Cerca S."/>
            <person name="Murat G."/>
            <person name="Enne T."/>
            <person name="Rinaldi D."/>
            <person name="Weigl S."/>
            <person name="Omanic H."/>
            <person name="Gleizes P.E."/>
            <person name="Kressler D."/>
            <person name="Plisson-Chastang C."/>
            <person name="Pertschy B."/>
        </authorList>
    </citation>
    <scope>STRUCTURE BY ELECTRON MICROSCOPY (3.47 ANGSTROMS)</scope>
</reference>
<reference evidence="8 9 10 11" key="7">
    <citation type="journal article" date="2020" name="Science">
        <title>90S pre-ribosome transformation into the primordial 40S subunit.</title>
        <authorList>
            <person name="Cheng J."/>
            <person name="Lau B."/>
            <person name="La Venuta G."/>
            <person name="Ameismeier M."/>
            <person name="Berninghausen O."/>
            <person name="Hurt E."/>
            <person name="Beckmann R."/>
        </authorList>
    </citation>
    <scope>STRUCTURE BY ELECTRON MICROSCOPY (3.50 ANGSTROMS)</scope>
</reference>
<reference evidence="12" key="8">
    <citation type="journal article" date="2021" name="Mol. Cell">
        <title>Structure of the Maturing 90S Pre-ribosome in Association with the RNA Exosome.</title>
        <authorList>
            <person name="Lau B."/>
            <person name="Cheng J."/>
            <person name="Flemming D."/>
            <person name="La Venuta G."/>
            <person name="Berninghausen O."/>
            <person name="Beckmann R."/>
            <person name="Hurt E."/>
        </authorList>
    </citation>
    <scope>STRUCTURE BY ELECTRON MICROSCOPY (3.80 ANGSTROMS)</scope>
</reference>
<organism>
    <name type="scientific">Saccharomyces cerevisiae (strain ATCC 204508 / S288c)</name>
    <name type="common">Baker's yeast</name>
    <dbReference type="NCBI Taxonomy" id="559292"/>
    <lineage>
        <taxon>Eukaryota</taxon>
        <taxon>Fungi</taxon>
        <taxon>Dikarya</taxon>
        <taxon>Ascomycota</taxon>
        <taxon>Saccharomycotina</taxon>
        <taxon>Saccharomycetes</taxon>
        <taxon>Saccharomycetales</taxon>
        <taxon>Saccharomycetaceae</taxon>
        <taxon>Saccharomyces</taxon>
    </lineage>
</organism>
<proteinExistence type="evidence at protein level"/>
<dbReference type="EC" id="2.1.1.183" evidence="1"/>
<dbReference type="EMBL" id="L26480">
    <property type="protein sequence ID" value="AAA57357.1"/>
    <property type="molecule type" value="Genomic_DNA"/>
</dbReference>
<dbReference type="EMBL" id="Z73622">
    <property type="protein sequence ID" value="CAA98001.1"/>
    <property type="molecule type" value="Genomic_DNA"/>
</dbReference>
<dbReference type="EMBL" id="BK006949">
    <property type="protein sequence ID" value="DAA11170.1"/>
    <property type="molecule type" value="Genomic_DNA"/>
</dbReference>
<dbReference type="PIR" id="S47985">
    <property type="entry name" value="S47985"/>
</dbReference>
<dbReference type="RefSeq" id="NP_015057.1">
    <property type="nucleotide sequence ID" value="NM_001184080.1"/>
</dbReference>
<dbReference type="PDB" id="6RBD">
    <property type="method" value="EM"/>
    <property type="resolution" value="3.47 A"/>
    <property type="chains" value="y=1-318"/>
</dbReference>
<dbReference type="PDB" id="6ZQD">
    <property type="method" value="EM"/>
    <property type="resolution" value="3.80 A"/>
    <property type="chains" value="JL=1-318"/>
</dbReference>
<dbReference type="PDB" id="6ZQE">
    <property type="method" value="EM"/>
    <property type="resolution" value="7.10 A"/>
    <property type="chains" value="JL=1-318"/>
</dbReference>
<dbReference type="PDB" id="6ZQF">
    <property type="method" value="EM"/>
    <property type="resolution" value="4.90 A"/>
    <property type="chains" value="JL=1-318"/>
</dbReference>
<dbReference type="PDB" id="6ZQG">
    <property type="method" value="EM"/>
    <property type="resolution" value="3.50 A"/>
    <property type="chains" value="JL=1-318"/>
</dbReference>
<dbReference type="PDB" id="7AJU">
    <property type="method" value="EM"/>
    <property type="resolution" value="3.80 A"/>
    <property type="chains" value="JL=1-318"/>
</dbReference>
<dbReference type="PDB" id="7WTL">
    <property type="method" value="EM"/>
    <property type="resolution" value="3.30 A"/>
    <property type="chains" value="JL=1-318"/>
</dbReference>
<dbReference type="PDB" id="7WTM">
    <property type="method" value="EM"/>
    <property type="resolution" value="3.50 A"/>
    <property type="chains" value="JL=1-318"/>
</dbReference>
<dbReference type="PDB" id="8CBJ">
    <property type="method" value="EM"/>
    <property type="resolution" value="3.80 A"/>
    <property type="chains" value="y=1-318"/>
</dbReference>
<dbReference type="PDBsum" id="6RBD"/>
<dbReference type="PDBsum" id="6ZQD"/>
<dbReference type="PDBsum" id="6ZQE"/>
<dbReference type="PDBsum" id="6ZQF"/>
<dbReference type="PDBsum" id="6ZQG"/>
<dbReference type="PDBsum" id="7AJU"/>
<dbReference type="PDBsum" id="7WTL"/>
<dbReference type="PDBsum" id="7WTM"/>
<dbReference type="PDBsum" id="8CBJ"/>
<dbReference type="EMDB" id="EMD-11360"/>
<dbReference type="EMDB" id="EMD-11361"/>
<dbReference type="EMDB" id="EMD-11362"/>
<dbReference type="EMDB" id="EMD-11363"/>
<dbReference type="EMDB" id="EMD-11808"/>
<dbReference type="EMDB" id="EMD-32790"/>
<dbReference type="EMDB" id="EMD-32791"/>
<dbReference type="EMDB" id="EMD-4792"/>
<dbReference type="SMR" id="P41819"/>
<dbReference type="BioGRID" id="35947">
    <property type="interactions" value="320"/>
</dbReference>
<dbReference type="DIP" id="DIP-3924N"/>
<dbReference type="FunCoup" id="P41819">
    <property type="interactions" value="907"/>
</dbReference>
<dbReference type="IntAct" id="P41819">
    <property type="interactions" value="47"/>
</dbReference>
<dbReference type="STRING" id="4932.YPL266W"/>
<dbReference type="GlyGen" id="P41819">
    <property type="glycosylation" value="2 sites, 1 O-linked glycan (2 sites)"/>
</dbReference>
<dbReference type="iPTMnet" id="P41819"/>
<dbReference type="PaxDb" id="4932-YPL266W"/>
<dbReference type="PeptideAtlas" id="P41819"/>
<dbReference type="EnsemblFungi" id="YPL266W_mRNA">
    <property type="protein sequence ID" value="YPL266W"/>
    <property type="gene ID" value="YPL266W"/>
</dbReference>
<dbReference type="GeneID" id="855862"/>
<dbReference type="KEGG" id="sce:YPL266W"/>
<dbReference type="AGR" id="SGD:S000006187"/>
<dbReference type="SGD" id="S000006187">
    <property type="gene designation" value="DIM1"/>
</dbReference>
<dbReference type="VEuPathDB" id="FungiDB:YPL266W"/>
<dbReference type="eggNOG" id="KOG0820">
    <property type="taxonomic scope" value="Eukaryota"/>
</dbReference>
<dbReference type="GeneTree" id="ENSGT00950000183142"/>
<dbReference type="HOGENOM" id="CLU_041220_2_0_1"/>
<dbReference type="InParanoid" id="P41819"/>
<dbReference type="OMA" id="ANYRTWC"/>
<dbReference type="OrthoDB" id="74991at2759"/>
<dbReference type="BioCyc" id="YEAST:G3O-34149-MONOMER"/>
<dbReference type="BioGRID-ORCS" id="855862">
    <property type="hits" value="4 hits in 10 CRISPR screens"/>
</dbReference>
<dbReference type="CD-CODE" id="BDAE0F88">
    <property type="entry name" value="Nucleolus"/>
</dbReference>
<dbReference type="CD-CODE" id="E03F929F">
    <property type="entry name" value="Stress granule"/>
</dbReference>
<dbReference type="PRO" id="PR:P41819"/>
<dbReference type="Proteomes" id="UP000002311">
    <property type="component" value="Chromosome XVI"/>
</dbReference>
<dbReference type="RNAct" id="P41819">
    <property type="molecule type" value="protein"/>
</dbReference>
<dbReference type="GO" id="GO:0030686">
    <property type="term" value="C:90S preribosome"/>
    <property type="evidence" value="ECO:0007005"/>
    <property type="project" value="SGD"/>
</dbReference>
<dbReference type="GO" id="GO:0005737">
    <property type="term" value="C:cytoplasm"/>
    <property type="evidence" value="ECO:0007669"/>
    <property type="project" value="UniProtKB-SubCell"/>
</dbReference>
<dbReference type="GO" id="GO:0005730">
    <property type="term" value="C:nucleolus"/>
    <property type="evidence" value="ECO:0007669"/>
    <property type="project" value="UniProtKB-SubCell"/>
</dbReference>
<dbReference type="GO" id="GO:0030688">
    <property type="term" value="C:preribosome, small subunit precursor"/>
    <property type="evidence" value="ECO:0000314"/>
    <property type="project" value="GO_Central"/>
</dbReference>
<dbReference type="GO" id="GO:0052909">
    <property type="term" value="F:18S rRNA (adenine(1779)-N(6)/adenine(1780)-N(6))-dimethyltransferase activity"/>
    <property type="evidence" value="ECO:0007669"/>
    <property type="project" value="UniProtKB-EC"/>
</dbReference>
<dbReference type="GO" id="GO:0003723">
    <property type="term" value="F:RNA binding"/>
    <property type="evidence" value="ECO:0007669"/>
    <property type="project" value="UniProtKB-KW"/>
</dbReference>
<dbReference type="GO" id="GO:0000179">
    <property type="term" value="F:rRNA (adenine-N6,N6-)-dimethyltransferase activity"/>
    <property type="evidence" value="ECO:0000250"/>
    <property type="project" value="SGD"/>
</dbReference>
<dbReference type="GO" id="GO:0000462">
    <property type="term" value="P:maturation of SSU-rRNA from tricistronic rRNA transcript (SSU-rRNA, 5.8S rRNA, LSU-rRNA)"/>
    <property type="evidence" value="ECO:0000315"/>
    <property type="project" value="SGD"/>
</dbReference>
<dbReference type="GO" id="GO:0031167">
    <property type="term" value="P:rRNA methylation"/>
    <property type="evidence" value="ECO:0000318"/>
    <property type="project" value="GO_Central"/>
</dbReference>
<dbReference type="GO" id="GO:0000154">
    <property type="term" value="P:rRNA modification"/>
    <property type="evidence" value="ECO:0000315"/>
    <property type="project" value="SGD"/>
</dbReference>
<dbReference type="CDD" id="cd02440">
    <property type="entry name" value="AdoMet_MTases"/>
    <property type="match status" value="1"/>
</dbReference>
<dbReference type="FunFam" id="1.10.8.480:FF:000002">
    <property type="entry name" value="rRNA adenine N(6)-methyltransferase"/>
    <property type="match status" value="1"/>
</dbReference>
<dbReference type="FunFam" id="3.40.50.150:FF:000007">
    <property type="entry name" value="rRNA adenine N(6)-methyltransferase"/>
    <property type="match status" value="1"/>
</dbReference>
<dbReference type="Gene3D" id="1.10.8.480">
    <property type="match status" value="1"/>
</dbReference>
<dbReference type="Gene3D" id="3.40.50.150">
    <property type="entry name" value="Vaccinia Virus protein VP39"/>
    <property type="match status" value="1"/>
</dbReference>
<dbReference type="InterPro" id="IPR001737">
    <property type="entry name" value="KsgA/Erm"/>
</dbReference>
<dbReference type="InterPro" id="IPR020596">
    <property type="entry name" value="rRNA_Ade_Mease_Trfase_CS"/>
</dbReference>
<dbReference type="InterPro" id="IPR020598">
    <property type="entry name" value="rRNA_Ade_methylase_Trfase_N"/>
</dbReference>
<dbReference type="InterPro" id="IPR011530">
    <property type="entry name" value="rRNA_adenine_dimethylase"/>
</dbReference>
<dbReference type="InterPro" id="IPR029063">
    <property type="entry name" value="SAM-dependent_MTases_sf"/>
</dbReference>
<dbReference type="NCBIfam" id="TIGR00755">
    <property type="entry name" value="ksgA"/>
    <property type="match status" value="1"/>
</dbReference>
<dbReference type="PANTHER" id="PTHR11727">
    <property type="entry name" value="DIMETHYLADENOSINE TRANSFERASE"/>
    <property type="match status" value="1"/>
</dbReference>
<dbReference type="PANTHER" id="PTHR11727:SF7">
    <property type="entry name" value="DIMETHYLADENOSINE TRANSFERASE-RELATED"/>
    <property type="match status" value="1"/>
</dbReference>
<dbReference type="Pfam" id="PF00398">
    <property type="entry name" value="RrnaAD"/>
    <property type="match status" value="1"/>
</dbReference>
<dbReference type="SMART" id="SM00650">
    <property type="entry name" value="rADc"/>
    <property type="match status" value="1"/>
</dbReference>
<dbReference type="SUPFAM" id="SSF53335">
    <property type="entry name" value="S-adenosyl-L-methionine-dependent methyltransferases"/>
    <property type="match status" value="1"/>
</dbReference>
<dbReference type="PROSITE" id="PS01131">
    <property type="entry name" value="RRNA_A_DIMETH"/>
    <property type="match status" value="1"/>
</dbReference>
<dbReference type="PROSITE" id="PS51689">
    <property type="entry name" value="SAM_RNA_A_N6_MT"/>
    <property type="match status" value="1"/>
</dbReference>
<name>DIM1_YEAST</name>
<feature type="chain" id="PRO_0000101464" description="Dimethyladenosine transferase">
    <location>
        <begin position="1"/>
        <end position="318"/>
    </location>
</feature>
<feature type="binding site" evidence="1">
    <location>
        <position position="37"/>
    </location>
    <ligand>
        <name>S-adenosyl-L-methionine</name>
        <dbReference type="ChEBI" id="CHEBI:59789"/>
    </ligand>
</feature>
<feature type="binding site" evidence="1">
    <location>
        <position position="39"/>
    </location>
    <ligand>
        <name>S-adenosyl-L-methionine</name>
        <dbReference type="ChEBI" id="CHEBI:59789"/>
    </ligand>
</feature>
<feature type="binding site" evidence="1">
    <location>
        <position position="64"/>
    </location>
    <ligand>
        <name>S-adenosyl-L-methionine</name>
        <dbReference type="ChEBI" id="CHEBI:59789"/>
    </ligand>
</feature>
<feature type="binding site" evidence="1">
    <location>
        <position position="85"/>
    </location>
    <ligand>
        <name>S-adenosyl-L-methionine</name>
        <dbReference type="ChEBI" id="CHEBI:59789"/>
    </ligand>
</feature>
<feature type="binding site" evidence="1">
    <location>
        <position position="113"/>
    </location>
    <ligand>
        <name>S-adenosyl-L-methionine</name>
        <dbReference type="ChEBI" id="CHEBI:59789"/>
    </ligand>
</feature>
<feature type="binding site" evidence="1">
    <location>
        <position position="128"/>
    </location>
    <ligand>
        <name>S-adenosyl-L-methionine</name>
        <dbReference type="ChEBI" id="CHEBI:59789"/>
    </ligand>
</feature>
<feature type="helix" evidence="13">
    <location>
        <begin position="139"/>
        <end position="141"/>
    </location>
</feature>
<feature type="strand" evidence="13">
    <location>
        <begin position="151"/>
        <end position="156"/>
    </location>
</feature>
<feature type="helix" evidence="13">
    <location>
        <begin position="157"/>
        <end position="163"/>
    </location>
</feature>
<feature type="strand" evidence="13">
    <location>
        <begin position="169"/>
        <end position="171"/>
    </location>
</feature>
<feature type="helix" evidence="13">
    <location>
        <begin position="174"/>
        <end position="182"/>
    </location>
</feature>
<feature type="strand" evidence="13">
    <location>
        <begin position="183"/>
        <end position="188"/>
    </location>
</feature>
<feature type="strand" evidence="13">
    <location>
        <begin position="204"/>
        <end position="211"/>
    </location>
</feature>
<feature type="helix" evidence="13">
    <location>
        <begin position="220"/>
        <end position="232"/>
    </location>
</feature>
<feature type="strand" evidence="13">
    <location>
        <begin position="233"/>
        <end position="236"/>
    </location>
</feature>
<feature type="helix" evidence="13">
    <location>
        <begin position="238"/>
        <end position="242"/>
    </location>
</feature>
<feature type="strand" evidence="13">
    <location>
        <begin position="244"/>
        <end position="246"/>
    </location>
</feature>
<feature type="helix" evidence="13">
    <location>
        <begin position="247"/>
        <end position="257"/>
    </location>
</feature>
<feature type="turn" evidence="13">
    <location>
        <begin position="258"/>
        <end position="263"/>
    </location>
</feature>
<feature type="turn" evidence="13">
    <location>
        <begin position="268"/>
        <end position="273"/>
    </location>
</feature>
<feature type="turn" evidence="13">
    <location>
        <begin position="276"/>
        <end position="278"/>
    </location>
</feature>
<feature type="helix" evidence="13">
    <location>
        <begin position="279"/>
        <end position="287"/>
    </location>
</feature>
<feature type="strand" evidence="13">
    <location>
        <begin position="291"/>
        <end position="293"/>
    </location>
</feature>
<feature type="turn" evidence="13">
    <location>
        <begin position="295"/>
        <end position="297"/>
    </location>
</feature>
<protein>
    <recommendedName>
        <fullName evidence="4">Dimethyladenosine transferase</fullName>
        <ecNumber evidence="1">2.1.1.183</ecNumber>
    </recommendedName>
    <alternativeName>
        <fullName>18S rRNA (adenine(1779)-N(6)/adenine(1780)-N(6))-dimethyltransferase</fullName>
    </alternativeName>
    <alternativeName>
        <fullName>18S rRNA dimethylase</fullName>
    </alternativeName>
    <alternativeName>
        <fullName>S-adenosylmethionine-6-N', N'-adenosyl(rRNA) dimethyltransferase</fullName>
    </alternativeName>
</protein>
<sequence length="318" mass="35951">MGKAAKKKYSGATSSKQVSAEKHLSSVFKFNTDLGQHILKNPLVAQGIVDKAQIRPSDVVLEVGPGTGNLTVRILEQAKNVVAVEMDPRMAAELTKRVRGTPVEKKLEIMLGDFMKTELPYFDICISNTPYQISSPLVFKLINQPRPPRVSILMFQREFALRLLARPGDSLYCRLSANVQMWANVTHIMKVGKNNFRPPPQVESSVVRLEIKNPRPQVDYNEWDGLLRIVFVRKNRTISAGFKSTTVMDILEKNYKTFLAMNNEMVDDTKGSMHDVVKEKIDTVLKETDLGDKRAGKCDQNDFLRLLYAFHQVGIHFS</sequence>
<accession>P41819</accession>
<accession>D6W3A4</accession>
<evidence type="ECO:0000255" key="1">
    <source>
        <dbReference type="PROSITE-ProRule" id="PRU01026"/>
    </source>
</evidence>
<evidence type="ECO:0000269" key="2">
    <source>
    </source>
</evidence>
<evidence type="ECO:0000269" key="3">
    <source>
    </source>
</evidence>
<evidence type="ECO:0000303" key="4">
    <source>
    </source>
</evidence>
<evidence type="ECO:0000305" key="5">
    <source>
    </source>
</evidence>
<evidence type="ECO:0000312" key="6">
    <source>
        <dbReference type="SGD" id="S000006187"/>
    </source>
</evidence>
<evidence type="ECO:0007744" key="7">
    <source>
        <dbReference type="PDB" id="6RBD"/>
    </source>
</evidence>
<evidence type="ECO:0007744" key="8">
    <source>
        <dbReference type="PDB" id="6ZQD"/>
    </source>
</evidence>
<evidence type="ECO:0007744" key="9">
    <source>
        <dbReference type="PDB" id="6ZQE"/>
    </source>
</evidence>
<evidence type="ECO:0007744" key="10">
    <source>
        <dbReference type="PDB" id="6ZQF"/>
    </source>
</evidence>
<evidence type="ECO:0007744" key="11">
    <source>
        <dbReference type="PDB" id="6ZQG"/>
    </source>
</evidence>
<evidence type="ECO:0007744" key="12">
    <source>
        <dbReference type="PDB" id="7AJU"/>
    </source>
</evidence>
<evidence type="ECO:0007829" key="13">
    <source>
        <dbReference type="PDB" id="6RBD"/>
    </source>
</evidence>
<gene>
    <name evidence="4" type="primary">DIM1</name>
    <name evidence="6" type="ordered locus">YPL266W</name>
</gene>